<protein>
    <recommendedName>
        <fullName evidence="1">Chaperone SurA</fullName>
    </recommendedName>
    <alternativeName>
        <fullName evidence="1">Peptidyl-prolyl cis-trans isomerase SurA</fullName>
        <shortName evidence="1">PPIase SurA</shortName>
        <ecNumber evidence="1">5.2.1.8</ecNumber>
    </alternativeName>
    <alternativeName>
        <fullName evidence="1">Rotamase SurA</fullName>
    </alternativeName>
</protein>
<keyword id="KW-0143">Chaperone</keyword>
<keyword id="KW-0413">Isomerase</keyword>
<keyword id="KW-0574">Periplasm</keyword>
<keyword id="KW-1185">Reference proteome</keyword>
<keyword id="KW-0677">Repeat</keyword>
<keyword id="KW-0697">Rotamase</keyword>
<keyword id="KW-0732">Signal</keyword>
<proteinExistence type="inferred from homology"/>
<organism>
    <name type="scientific">Shewanella oneidensis (strain ATCC 700550 / JCM 31522 / CIP 106686 / LMG 19005 / NCIMB 14063 / MR-1)</name>
    <dbReference type="NCBI Taxonomy" id="211586"/>
    <lineage>
        <taxon>Bacteria</taxon>
        <taxon>Pseudomonadati</taxon>
        <taxon>Pseudomonadota</taxon>
        <taxon>Gammaproteobacteria</taxon>
        <taxon>Alteromonadales</taxon>
        <taxon>Shewanellaceae</taxon>
        <taxon>Shewanella</taxon>
    </lineage>
</organism>
<accession>Q8EB95</accession>
<name>SURA_SHEON</name>
<feature type="signal peptide" evidence="1">
    <location>
        <begin position="1"/>
        <end position="22"/>
    </location>
</feature>
<feature type="chain" id="PRO_0000270038" description="Chaperone SurA">
    <location>
        <begin position="23"/>
        <end position="434"/>
    </location>
</feature>
<feature type="domain" description="PpiC 1" evidence="1">
    <location>
        <begin position="173"/>
        <end position="274"/>
    </location>
</feature>
<feature type="domain" description="PpiC 2" evidence="1">
    <location>
        <begin position="283"/>
        <end position="383"/>
    </location>
</feature>
<evidence type="ECO:0000255" key="1">
    <source>
        <dbReference type="HAMAP-Rule" id="MF_01183"/>
    </source>
</evidence>
<comment type="function">
    <text evidence="1">Chaperone involved in the correct folding and assembly of outer membrane proteins. Recognizes specific patterns of aromatic residues and the orientation of their side chains, which are found more frequently in integral outer membrane proteins. May act in both early periplasmic and late outer membrane-associated steps of protein maturation.</text>
</comment>
<comment type="catalytic activity">
    <reaction evidence="1">
        <text>[protein]-peptidylproline (omega=180) = [protein]-peptidylproline (omega=0)</text>
        <dbReference type="Rhea" id="RHEA:16237"/>
        <dbReference type="Rhea" id="RHEA-COMP:10747"/>
        <dbReference type="Rhea" id="RHEA-COMP:10748"/>
        <dbReference type="ChEBI" id="CHEBI:83833"/>
        <dbReference type="ChEBI" id="CHEBI:83834"/>
        <dbReference type="EC" id="5.2.1.8"/>
    </reaction>
</comment>
<comment type="subcellular location">
    <subcellularLocation>
        <location evidence="1">Periplasm</location>
    </subcellularLocation>
    <text evidence="1">Is capable of associating with the outer membrane.</text>
</comment>
<comment type="domain">
    <text evidence="1">The PPIase activity resides only in the second parvulin domain. The N-terminal region and the C-terminal tail are necessary and sufficient for the chaperone activity of SurA. The PPIase activity is dispensable for SurA to function as a chaperone. The N-terminal region and the C-terminal tail are also required for porin recognition.</text>
</comment>
<sequence length="434" mass="48914">MKPSKHLIFALFALAISQPTMAAPQPLDRVAVQINDGIVLESEITNMIDTVKANAKAANQSLPSDSALRTQVIERLILTRLQLQMADRIGLHIGDLQLDQAIENIAREQKMTVAQMQQKIASEGISFSQYREQLREEITLGEIQRIQVQRRIQVSPQEITGLVKLIQEQGMKDVEYQIGHILIDVPNNPTSEQLEASSKRANAVLERLKSGEDFRRTAIASSSGPKALEGGIWDYMNINEMPTLFAEVINGAKKGDIIGPIKTGAGFHIIKIMDARGLQTKEIEEVRARHILLKPSPILSEDRAKAMLEQFLKQIRSGEAKFEDLARQYSEDPGSATKGGELGWAEPSIYVPEFAQTLNSLSPDQISEPFRTTHGWHITQLEERRKTDATDQFNTNRAHQLIFRRKFNEELQNWLDEMRADAYIEVFQPESNRG</sequence>
<reference key="1">
    <citation type="journal article" date="2002" name="Nat. Biotechnol.">
        <title>Genome sequence of the dissimilatory metal ion-reducing bacterium Shewanella oneidensis.</title>
        <authorList>
            <person name="Heidelberg J.F."/>
            <person name="Paulsen I.T."/>
            <person name="Nelson K.E."/>
            <person name="Gaidos E.J."/>
            <person name="Nelson W.C."/>
            <person name="Read T.D."/>
            <person name="Eisen J.A."/>
            <person name="Seshadri R."/>
            <person name="Ward N.L."/>
            <person name="Methe B.A."/>
            <person name="Clayton R.A."/>
            <person name="Meyer T."/>
            <person name="Tsapin A."/>
            <person name="Scott J."/>
            <person name="Beanan M.J."/>
            <person name="Brinkac L.M."/>
            <person name="Daugherty S.C."/>
            <person name="DeBoy R.T."/>
            <person name="Dodson R.J."/>
            <person name="Durkin A.S."/>
            <person name="Haft D.H."/>
            <person name="Kolonay J.F."/>
            <person name="Madupu R."/>
            <person name="Peterson J.D."/>
            <person name="Umayam L.A."/>
            <person name="White O."/>
            <person name="Wolf A.M."/>
            <person name="Vamathevan J.J."/>
            <person name="Weidman J.F."/>
            <person name="Impraim M."/>
            <person name="Lee K."/>
            <person name="Berry K.J."/>
            <person name="Lee C."/>
            <person name="Mueller J."/>
            <person name="Khouri H.M."/>
            <person name="Gill J."/>
            <person name="Utterback T.R."/>
            <person name="McDonald L.A."/>
            <person name="Feldblyum T.V."/>
            <person name="Smith H.O."/>
            <person name="Venter J.C."/>
            <person name="Nealson K.H."/>
            <person name="Fraser C.M."/>
        </authorList>
    </citation>
    <scope>NUCLEOTIDE SEQUENCE [LARGE SCALE GENOMIC DNA]</scope>
    <source>
        <strain>ATCC 700550 / JCM 31522 / CIP 106686 / LMG 19005 / NCIMB 14063 / MR-1</strain>
    </source>
</reference>
<dbReference type="EC" id="5.2.1.8" evidence="1"/>
<dbReference type="EMBL" id="AE014299">
    <property type="protein sequence ID" value="AAN56623.1"/>
    <property type="molecule type" value="Genomic_DNA"/>
</dbReference>
<dbReference type="RefSeq" id="NP_719179.1">
    <property type="nucleotide sequence ID" value="NC_004347.2"/>
</dbReference>
<dbReference type="RefSeq" id="WP_011073440.1">
    <property type="nucleotide sequence ID" value="NC_004347.2"/>
</dbReference>
<dbReference type="SMR" id="Q8EB95"/>
<dbReference type="STRING" id="211586.SO_3637"/>
<dbReference type="PaxDb" id="211586-SO_3637"/>
<dbReference type="KEGG" id="son:SO_3637"/>
<dbReference type="PATRIC" id="fig|211586.12.peg.3526"/>
<dbReference type="eggNOG" id="COG0760">
    <property type="taxonomic scope" value="Bacteria"/>
</dbReference>
<dbReference type="HOGENOM" id="CLU_034646_11_0_6"/>
<dbReference type="OrthoDB" id="14196at2"/>
<dbReference type="PhylomeDB" id="Q8EB95"/>
<dbReference type="BioCyc" id="SONE211586:G1GMP-3388-MONOMER"/>
<dbReference type="Proteomes" id="UP000008186">
    <property type="component" value="Chromosome"/>
</dbReference>
<dbReference type="GO" id="GO:0030288">
    <property type="term" value="C:outer membrane-bounded periplasmic space"/>
    <property type="evidence" value="ECO:0000318"/>
    <property type="project" value="GO_Central"/>
</dbReference>
<dbReference type="GO" id="GO:0042277">
    <property type="term" value="F:peptide binding"/>
    <property type="evidence" value="ECO:0007669"/>
    <property type="project" value="InterPro"/>
</dbReference>
<dbReference type="GO" id="GO:0003755">
    <property type="term" value="F:peptidyl-prolyl cis-trans isomerase activity"/>
    <property type="evidence" value="ECO:0000318"/>
    <property type="project" value="GO_Central"/>
</dbReference>
<dbReference type="GO" id="GO:0051082">
    <property type="term" value="F:unfolded protein binding"/>
    <property type="evidence" value="ECO:0000318"/>
    <property type="project" value="GO_Central"/>
</dbReference>
<dbReference type="GO" id="GO:0061077">
    <property type="term" value="P:chaperone-mediated protein folding"/>
    <property type="evidence" value="ECO:0000318"/>
    <property type="project" value="GO_Central"/>
</dbReference>
<dbReference type="GO" id="GO:0043165">
    <property type="term" value="P:Gram-negative-bacterium-type cell outer membrane assembly"/>
    <property type="evidence" value="ECO:0007669"/>
    <property type="project" value="InterPro"/>
</dbReference>
<dbReference type="GO" id="GO:0050821">
    <property type="term" value="P:protein stabilization"/>
    <property type="evidence" value="ECO:0007669"/>
    <property type="project" value="InterPro"/>
</dbReference>
<dbReference type="Gene3D" id="3.10.50.40">
    <property type="match status" value="2"/>
</dbReference>
<dbReference type="Gene3D" id="1.10.4030.10">
    <property type="entry name" value="Porin chaperone SurA, peptide-binding domain"/>
    <property type="match status" value="2"/>
</dbReference>
<dbReference type="HAMAP" id="MF_01183">
    <property type="entry name" value="Chaperone_SurA"/>
    <property type="match status" value="1"/>
</dbReference>
<dbReference type="InterPro" id="IPR050280">
    <property type="entry name" value="OMP_Chaperone_SurA"/>
</dbReference>
<dbReference type="InterPro" id="IPR046357">
    <property type="entry name" value="PPIase_dom_sf"/>
</dbReference>
<dbReference type="InterPro" id="IPR000297">
    <property type="entry name" value="PPIase_PpiC"/>
</dbReference>
<dbReference type="InterPro" id="IPR023058">
    <property type="entry name" value="PPIase_PpiC_CS"/>
</dbReference>
<dbReference type="InterPro" id="IPR023034">
    <property type="entry name" value="PPIase_SurA"/>
</dbReference>
<dbReference type="InterPro" id="IPR015391">
    <property type="entry name" value="SurA_N"/>
</dbReference>
<dbReference type="InterPro" id="IPR027304">
    <property type="entry name" value="Trigger_fact/SurA_dom_sf"/>
</dbReference>
<dbReference type="NCBIfam" id="NF008038">
    <property type="entry name" value="PRK10770.1"/>
    <property type="match status" value="1"/>
</dbReference>
<dbReference type="PANTHER" id="PTHR47637">
    <property type="entry name" value="CHAPERONE SURA"/>
    <property type="match status" value="1"/>
</dbReference>
<dbReference type="PANTHER" id="PTHR47637:SF1">
    <property type="entry name" value="CHAPERONE SURA"/>
    <property type="match status" value="1"/>
</dbReference>
<dbReference type="Pfam" id="PF00639">
    <property type="entry name" value="Rotamase"/>
    <property type="match status" value="2"/>
</dbReference>
<dbReference type="Pfam" id="PF09312">
    <property type="entry name" value="SurA_N"/>
    <property type="match status" value="1"/>
</dbReference>
<dbReference type="SUPFAM" id="SSF54534">
    <property type="entry name" value="FKBP-like"/>
    <property type="match status" value="2"/>
</dbReference>
<dbReference type="SUPFAM" id="SSF109998">
    <property type="entry name" value="Triger factor/SurA peptide-binding domain-like"/>
    <property type="match status" value="1"/>
</dbReference>
<dbReference type="PROSITE" id="PS01096">
    <property type="entry name" value="PPIC_PPIASE_1"/>
    <property type="match status" value="1"/>
</dbReference>
<dbReference type="PROSITE" id="PS50198">
    <property type="entry name" value="PPIC_PPIASE_2"/>
    <property type="match status" value="2"/>
</dbReference>
<gene>
    <name evidence="1" type="primary">surA</name>
    <name type="ordered locus">SO_3637</name>
</gene>